<keyword id="KW-0067">ATP-binding</keyword>
<keyword id="KW-0966">Cell projection</keyword>
<keyword id="KW-0969">Cilium</keyword>
<keyword id="KW-0970">Cilium biogenesis/degradation</keyword>
<keyword id="KW-0175">Coiled coil</keyword>
<keyword id="KW-0963">Cytoplasm</keyword>
<keyword id="KW-0206">Cytoskeleton</keyword>
<keyword id="KW-0493">Microtubule</keyword>
<keyword id="KW-0505">Motor protein</keyword>
<keyword id="KW-0547">Nucleotide-binding</keyword>
<keyword id="KW-0597">Phosphoprotein</keyword>
<keyword id="KW-1185">Reference proteome</keyword>
<evidence type="ECO:0000250" key="1"/>
<evidence type="ECO:0000250" key="2">
    <source>
        <dbReference type="UniProtKB" id="Q7M6Z4"/>
    </source>
</evidence>
<evidence type="ECO:0000255" key="3"/>
<evidence type="ECO:0000255" key="4">
    <source>
        <dbReference type="PROSITE-ProRule" id="PRU00283"/>
    </source>
</evidence>
<evidence type="ECO:0000256" key="5">
    <source>
        <dbReference type="SAM" id="MobiDB-lite"/>
    </source>
</evidence>
<evidence type="ECO:0000305" key="6"/>
<evidence type="ECO:0007744" key="7">
    <source>
    </source>
</evidence>
<dbReference type="EMBL" id="AABR03104681">
    <property type="status" value="NOT_ANNOTATED_CDS"/>
    <property type="molecule type" value="Genomic_DNA"/>
</dbReference>
<dbReference type="EMBL" id="AABR03107397">
    <property type="status" value="NOT_ANNOTATED_CDS"/>
    <property type="molecule type" value="Genomic_DNA"/>
</dbReference>
<dbReference type="EMBL" id="AABR03106101">
    <property type="status" value="NOT_ANNOTATED_CDS"/>
    <property type="molecule type" value="Genomic_DNA"/>
</dbReference>
<dbReference type="EMBL" id="AABR03107556">
    <property type="status" value="NOT_ANNOTATED_CDS"/>
    <property type="molecule type" value="Genomic_DNA"/>
</dbReference>
<dbReference type="EMBL" id="BK001053">
    <property type="protein sequence ID" value="DAA01311.1"/>
    <property type="molecule type" value="mRNA"/>
</dbReference>
<dbReference type="RefSeq" id="NP_932167.1">
    <property type="nucleotide sequence ID" value="NM_198050.1"/>
</dbReference>
<dbReference type="RefSeq" id="XP_006253618.1">
    <property type="nucleotide sequence ID" value="XM_006253556.5"/>
</dbReference>
<dbReference type="RefSeq" id="XP_008769646.1">
    <property type="nucleotide sequence ID" value="XM_008771424.2"/>
</dbReference>
<dbReference type="RefSeq" id="XP_063132127.1">
    <property type="nucleotide sequence ID" value="XM_063276057.1"/>
</dbReference>
<dbReference type="RefSeq" id="XP_063132128.1">
    <property type="nucleotide sequence ID" value="XM_063276058.1"/>
</dbReference>
<dbReference type="SMR" id="Q7M6Z5"/>
<dbReference type="FunCoup" id="Q7M6Z5">
    <property type="interactions" value="366"/>
</dbReference>
<dbReference type="STRING" id="10116.ENSRNOP00000074434"/>
<dbReference type="iPTMnet" id="Q7M6Z5"/>
<dbReference type="PhosphoSitePlus" id="Q7M6Z5"/>
<dbReference type="jPOST" id="Q7M6Z5"/>
<dbReference type="PaxDb" id="10116-ENSRNOP00000026054"/>
<dbReference type="Ensembl" id="ENSRNOT00000026054.5">
    <property type="protein sequence ID" value="ENSRNOP00000026054.5"/>
    <property type="gene ID" value="ENSRNOG00000019257.6"/>
</dbReference>
<dbReference type="GeneID" id="246209"/>
<dbReference type="KEGG" id="rno:246209"/>
<dbReference type="UCSC" id="RGD:621071">
    <property type="organism name" value="rat"/>
</dbReference>
<dbReference type="AGR" id="RGD:621071"/>
<dbReference type="CTD" id="55582"/>
<dbReference type="RGD" id="621071">
    <property type="gene designation" value="Kif27"/>
</dbReference>
<dbReference type="eggNOG" id="KOG0244">
    <property type="taxonomic scope" value="Eukaryota"/>
</dbReference>
<dbReference type="GeneTree" id="ENSGT00940000157487"/>
<dbReference type="HOGENOM" id="CLU_005591_0_0_1"/>
<dbReference type="InParanoid" id="Q7M6Z5"/>
<dbReference type="OMA" id="YVIMNTF"/>
<dbReference type="OrthoDB" id="72459at9989"/>
<dbReference type="PhylomeDB" id="Q7M6Z5"/>
<dbReference type="TreeFam" id="TF325946"/>
<dbReference type="Reactome" id="R-RNO-2132295">
    <property type="pathway name" value="MHC class II antigen presentation"/>
</dbReference>
<dbReference type="Reactome" id="R-RNO-6811434">
    <property type="pathway name" value="COPI-dependent Golgi-to-ER retrograde traffic"/>
</dbReference>
<dbReference type="Reactome" id="R-RNO-983189">
    <property type="pathway name" value="Kinesins"/>
</dbReference>
<dbReference type="PRO" id="PR:Q7M6Z5"/>
<dbReference type="Proteomes" id="UP000002494">
    <property type="component" value="Chromosome 17"/>
</dbReference>
<dbReference type="Bgee" id="ENSRNOG00000019257">
    <property type="expression patterns" value="Expressed in testis and 6 other cell types or tissues"/>
</dbReference>
<dbReference type="GO" id="GO:0005929">
    <property type="term" value="C:cilium"/>
    <property type="evidence" value="ECO:0000250"/>
    <property type="project" value="UniProtKB"/>
</dbReference>
<dbReference type="GO" id="GO:0005737">
    <property type="term" value="C:cytoplasm"/>
    <property type="evidence" value="ECO:0000318"/>
    <property type="project" value="GO_Central"/>
</dbReference>
<dbReference type="GO" id="GO:0005576">
    <property type="term" value="C:extracellular region"/>
    <property type="evidence" value="ECO:0007669"/>
    <property type="project" value="GOC"/>
</dbReference>
<dbReference type="GO" id="GO:0005871">
    <property type="term" value="C:kinesin complex"/>
    <property type="evidence" value="ECO:0000318"/>
    <property type="project" value="GO_Central"/>
</dbReference>
<dbReference type="GO" id="GO:0005874">
    <property type="term" value="C:microtubule"/>
    <property type="evidence" value="ECO:0000318"/>
    <property type="project" value="GO_Central"/>
</dbReference>
<dbReference type="GO" id="GO:0005524">
    <property type="term" value="F:ATP binding"/>
    <property type="evidence" value="ECO:0007669"/>
    <property type="project" value="UniProtKB-KW"/>
</dbReference>
<dbReference type="GO" id="GO:0016887">
    <property type="term" value="F:ATP hydrolysis activity"/>
    <property type="evidence" value="ECO:0000318"/>
    <property type="project" value="GO_Central"/>
</dbReference>
<dbReference type="GO" id="GO:0008017">
    <property type="term" value="F:microtubule binding"/>
    <property type="evidence" value="ECO:0000318"/>
    <property type="project" value="GO_Central"/>
</dbReference>
<dbReference type="GO" id="GO:0003777">
    <property type="term" value="F:microtubule motor activity"/>
    <property type="evidence" value="ECO:0000318"/>
    <property type="project" value="GO_Central"/>
</dbReference>
<dbReference type="GO" id="GO:0060271">
    <property type="term" value="P:cilium assembly"/>
    <property type="evidence" value="ECO:0000250"/>
    <property type="project" value="UniProtKB"/>
</dbReference>
<dbReference type="GO" id="GO:0003351">
    <property type="term" value="P:epithelial cilium movement involved in extracellular fluid movement"/>
    <property type="evidence" value="ECO:0000266"/>
    <property type="project" value="RGD"/>
</dbReference>
<dbReference type="GO" id="GO:0051649">
    <property type="term" value="P:establishment of localization in cell"/>
    <property type="evidence" value="ECO:0000266"/>
    <property type="project" value="RGD"/>
</dbReference>
<dbReference type="GO" id="GO:0007018">
    <property type="term" value="P:microtubule-based movement"/>
    <property type="evidence" value="ECO:0000318"/>
    <property type="project" value="GO_Central"/>
</dbReference>
<dbReference type="GO" id="GO:0021591">
    <property type="term" value="P:ventricular system development"/>
    <property type="evidence" value="ECO:0000266"/>
    <property type="project" value="RGD"/>
</dbReference>
<dbReference type="CDD" id="cd01372">
    <property type="entry name" value="KISc_KIF4"/>
    <property type="match status" value="1"/>
</dbReference>
<dbReference type="FunFam" id="3.40.850.10:FF:000025">
    <property type="entry name" value="kinesin-like protein KIF27 isoform X1"/>
    <property type="match status" value="1"/>
</dbReference>
<dbReference type="Gene3D" id="3.40.850.10">
    <property type="entry name" value="Kinesin motor domain"/>
    <property type="match status" value="1"/>
</dbReference>
<dbReference type="InterPro" id="IPR027640">
    <property type="entry name" value="Kinesin-like_fam"/>
</dbReference>
<dbReference type="InterPro" id="IPR019821">
    <property type="entry name" value="Kinesin_motor_CS"/>
</dbReference>
<dbReference type="InterPro" id="IPR001752">
    <property type="entry name" value="Kinesin_motor_dom"/>
</dbReference>
<dbReference type="InterPro" id="IPR036961">
    <property type="entry name" value="Kinesin_motor_dom_sf"/>
</dbReference>
<dbReference type="InterPro" id="IPR027417">
    <property type="entry name" value="P-loop_NTPase"/>
</dbReference>
<dbReference type="PANTHER" id="PTHR47969">
    <property type="entry name" value="CHROMOSOME-ASSOCIATED KINESIN KIF4A-RELATED"/>
    <property type="match status" value="1"/>
</dbReference>
<dbReference type="PANTHER" id="PTHR47969:SF30">
    <property type="entry name" value="KINESIN FAMILY MEMBER 27"/>
    <property type="match status" value="1"/>
</dbReference>
<dbReference type="Pfam" id="PF00225">
    <property type="entry name" value="Kinesin"/>
    <property type="match status" value="1"/>
</dbReference>
<dbReference type="PRINTS" id="PR00380">
    <property type="entry name" value="KINESINHEAVY"/>
</dbReference>
<dbReference type="SMART" id="SM00129">
    <property type="entry name" value="KISc"/>
    <property type="match status" value="1"/>
</dbReference>
<dbReference type="SUPFAM" id="SSF52540">
    <property type="entry name" value="P-loop containing nucleoside triphosphate hydrolases"/>
    <property type="match status" value="1"/>
</dbReference>
<dbReference type="PROSITE" id="PS00411">
    <property type="entry name" value="KINESIN_MOTOR_1"/>
    <property type="match status" value="1"/>
</dbReference>
<dbReference type="PROSITE" id="PS50067">
    <property type="entry name" value="KINESIN_MOTOR_2"/>
    <property type="match status" value="1"/>
</dbReference>
<gene>
    <name type="primary">Kif27</name>
</gene>
<comment type="function">
    <text evidence="1">Plays an essential role in motile ciliogenesis.</text>
</comment>
<comment type="subunit">
    <text evidence="1">Interacts with STK36.</text>
</comment>
<comment type="subcellular location">
    <subcellularLocation>
        <location evidence="6">Cytoplasm</location>
        <location evidence="6">Cytoskeleton</location>
    </subcellularLocation>
    <subcellularLocation>
        <location evidence="1">Cell projection</location>
        <location evidence="1">Cilium</location>
    </subcellularLocation>
    <text evidence="1">Localizes to centrioles and basal bodies.</text>
</comment>
<comment type="similarity">
    <text evidence="4">Belongs to the TRAFAC class myosin-kinesin ATPase superfamily. Kinesin family. KIF27 subfamily.</text>
</comment>
<protein>
    <recommendedName>
        <fullName>Kinesin-like protein KIF27</fullName>
    </recommendedName>
</protein>
<reference key="1">
    <citation type="journal article" date="2004" name="Nature">
        <title>Genome sequence of the Brown Norway rat yields insights into mammalian evolution.</title>
        <authorList>
            <person name="Gibbs R.A."/>
            <person name="Weinstock G.M."/>
            <person name="Metzker M.L."/>
            <person name="Muzny D.M."/>
            <person name="Sodergren E.J."/>
            <person name="Scherer S."/>
            <person name="Scott G."/>
            <person name="Steffen D."/>
            <person name="Worley K.C."/>
            <person name="Burch P.E."/>
            <person name="Okwuonu G."/>
            <person name="Hines S."/>
            <person name="Lewis L."/>
            <person name="Deramo C."/>
            <person name="Delgado O."/>
            <person name="Dugan-Rocha S."/>
            <person name="Miner G."/>
            <person name="Morgan M."/>
            <person name="Hawes A."/>
            <person name="Gill R."/>
            <person name="Holt R.A."/>
            <person name="Adams M.D."/>
            <person name="Amanatides P.G."/>
            <person name="Baden-Tillson H."/>
            <person name="Barnstead M."/>
            <person name="Chin S."/>
            <person name="Evans C.A."/>
            <person name="Ferriera S."/>
            <person name="Fosler C."/>
            <person name="Glodek A."/>
            <person name="Gu Z."/>
            <person name="Jennings D."/>
            <person name="Kraft C.L."/>
            <person name="Nguyen T."/>
            <person name="Pfannkoch C.M."/>
            <person name="Sitter C."/>
            <person name="Sutton G.G."/>
            <person name="Venter J.C."/>
            <person name="Woodage T."/>
            <person name="Smith D."/>
            <person name="Lee H.-M."/>
            <person name="Gustafson E."/>
            <person name="Cahill P."/>
            <person name="Kana A."/>
            <person name="Doucette-Stamm L."/>
            <person name="Weinstock K."/>
            <person name="Fechtel K."/>
            <person name="Weiss R.B."/>
            <person name="Dunn D.M."/>
            <person name="Green E.D."/>
            <person name="Blakesley R.W."/>
            <person name="Bouffard G.G."/>
            <person name="De Jong P.J."/>
            <person name="Osoegawa K."/>
            <person name="Zhu B."/>
            <person name="Marra M."/>
            <person name="Schein J."/>
            <person name="Bosdet I."/>
            <person name="Fjell C."/>
            <person name="Jones S."/>
            <person name="Krzywinski M."/>
            <person name="Mathewson C."/>
            <person name="Siddiqui A."/>
            <person name="Wye N."/>
            <person name="McPherson J."/>
            <person name="Zhao S."/>
            <person name="Fraser C.M."/>
            <person name="Shetty J."/>
            <person name="Shatsman S."/>
            <person name="Geer K."/>
            <person name="Chen Y."/>
            <person name="Abramzon S."/>
            <person name="Nierman W.C."/>
            <person name="Havlak P.H."/>
            <person name="Chen R."/>
            <person name="Durbin K.J."/>
            <person name="Egan A."/>
            <person name="Ren Y."/>
            <person name="Song X.-Z."/>
            <person name="Li B."/>
            <person name="Liu Y."/>
            <person name="Qin X."/>
            <person name="Cawley S."/>
            <person name="Cooney A.J."/>
            <person name="D'Souza L.M."/>
            <person name="Martin K."/>
            <person name="Wu J.Q."/>
            <person name="Gonzalez-Garay M.L."/>
            <person name="Jackson A.R."/>
            <person name="Kalafus K.J."/>
            <person name="McLeod M.P."/>
            <person name="Milosavljevic A."/>
            <person name="Virk D."/>
            <person name="Volkov A."/>
            <person name="Wheeler D.A."/>
            <person name="Zhang Z."/>
            <person name="Bailey J.A."/>
            <person name="Eichler E.E."/>
            <person name="Tuzun E."/>
            <person name="Birney E."/>
            <person name="Mongin E."/>
            <person name="Ureta-Vidal A."/>
            <person name="Woodwark C."/>
            <person name="Zdobnov E."/>
            <person name="Bork P."/>
            <person name="Suyama M."/>
            <person name="Torrents D."/>
            <person name="Alexandersson M."/>
            <person name="Trask B.J."/>
            <person name="Young J.M."/>
            <person name="Huang H."/>
            <person name="Wang H."/>
            <person name="Xing H."/>
            <person name="Daniels S."/>
            <person name="Gietzen D."/>
            <person name="Schmidt J."/>
            <person name="Stevens K."/>
            <person name="Vitt U."/>
            <person name="Wingrove J."/>
            <person name="Camara F."/>
            <person name="Mar Alba M."/>
            <person name="Abril J.F."/>
            <person name="Guigo R."/>
            <person name="Smit A."/>
            <person name="Dubchak I."/>
            <person name="Rubin E.M."/>
            <person name="Couronne O."/>
            <person name="Poliakov A."/>
            <person name="Huebner N."/>
            <person name="Ganten D."/>
            <person name="Goesele C."/>
            <person name="Hummel O."/>
            <person name="Kreitler T."/>
            <person name="Lee Y.-A."/>
            <person name="Monti J."/>
            <person name="Schulz H."/>
            <person name="Zimdahl H."/>
            <person name="Himmelbauer H."/>
            <person name="Lehrach H."/>
            <person name="Jacob H.J."/>
            <person name="Bromberg S."/>
            <person name="Gullings-Handley J."/>
            <person name="Jensen-Seaman M.I."/>
            <person name="Kwitek A.E."/>
            <person name="Lazar J."/>
            <person name="Pasko D."/>
            <person name="Tonellato P.J."/>
            <person name="Twigger S."/>
            <person name="Ponting C.P."/>
            <person name="Duarte J.M."/>
            <person name="Rice S."/>
            <person name="Goodstadt L."/>
            <person name="Beatson S.A."/>
            <person name="Emes R.D."/>
            <person name="Winter E.E."/>
            <person name="Webber C."/>
            <person name="Brandt P."/>
            <person name="Nyakatura G."/>
            <person name="Adetobi M."/>
            <person name="Chiaromonte F."/>
            <person name="Elnitski L."/>
            <person name="Eswara P."/>
            <person name="Hardison R.C."/>
            <person name="Hou M."/>
            <person name="Kolbe D."/>
            <person name="Makova K."/>
            <person name="Miller W."/>
            <person name="Nekrutenko A."/>
            <person name="Riemer C."/>
            <person name="Schwartz S."/>
            <person name="Taylor J."/>
            <person name="Yang S."/>
            <person name="Zhang Y."/>
            <person name="Lindpaintner K."/>
            <person name="Andrews T.D."/>
            <person name="Caccamo M."/>
            <person name="Clamp M."/>
            <person name="Clarke L."/>
            <person name="Curwen V."/>
            <person name="Durbin R.M."/>
            <person name="Eyras E."/>
            <person name="Searle S.M."/>
            <person name="Cooper G.M."/>
            <person name="Batzoglou S."/>
            <person name="Brudno M."/>
            <person name="Sidow A."/>
            <person name="Stone E.A."/>
            <person name="Payseur B.A."/>
            <person name="Bourque G."/>
            <person name="Lopez-Otin C."/>
            <person name="Puente X.S."/>
            <person name="Chakrabarti K."/>
            <person name="Chatterji S."/>
            <person name="Dewey C."/>
            <person name="Pachter L."/>
            <person name="Bray N."/>
            <person name="Yap V.B."/>
            <person name="Caspi A."/>
            <person name="Tesler G."/>
            <person name="Pevzner P.A."/>
            <person name="Haussler D."/>
            <person name="Roskin K.M."/>
            <person name="Baertsch R."/>
            <person name="Clawson H."/>
            <person name="Furey T.S."/>
            <person name="Hinrichs A.S."/>
            <person name="Karolchik D."/>
            <person name="Kent W.J."/>
            <person name="Rosenbloom K.R."/>
            <person name="Trumbower H."/>
            <person name="Weirauch M."/>
            <person name="Cooper D.N."/>
            <person name="Stenson P.D."/>
            <person name="Ma B."/>
            <person name="Brent M."/>
            <person name="Arumugam M."/>
            <person name="Shteynberg D."/>
            <person name="Copley R.R."/>
            <person name="Taylor M.S."/>
            <person name="Riethman H."/>
            <person name="Mudunuri U."/>
            <person name="Peterson J."/>
            <person name="Guyer M."/>
            <person name="Felsenfeld A."/>
            <person name="Old S."/>
            <person name="Mockrin S."/>
            <person name="Collins F.S."/>
        </authorList>
    </citation>
    <scope>NUCLEOTIDE SEQUENCE [LARGE SCALE GENOMIC DNA]</scope>
    <source>
        <strain>Brown Norway</strain>
    </source>
</reference>
<reference key="2">
    <citation type="journal article" date="2003" name="BMC Genomics">
        <title>Gene discovery in the hamster: a comparative genomics approach for gene annotation by sequencing of hamster testis cDNAs.</title>
        <authorList>
            <person name="Oduru S."/>
            <person name="Campbell J.L."/>
            <person name="Karri S."/>
            <person name="Hendry W.J."/>
            <person name="Khan S.A."/>
            <person name="Williams S.C."/>
        </authorList>
    </citation>
    <scope>IDENTIFICATION</scope>
</reference>
<reference key="3">
    <citation type="journal article" date="2012" name="Nat. Commun.">
        <title>Quantitative maps of protein phosphorylation sites across 14 different rat organs and tissues.</title>
        <authorList>
            <person name="Lundby A."/>
            <person name="Secher A."/>
            <person name="Lage K."/>
            <person name="Nordsborg N.B."/>
            <person name="Dmytriyev A."/>
            <person name="Lundby C."/>
            <person name="Olsen J.V."/>
        </authorList>
    </citation>
    <scope>PHOSPHORYLATION [LARGE SCALE ANALYSIS] AT SER-672; SER-675; SER-704; SER-999; SER-1365 AND SER-1387</scope>
    <scope>IDENTIFICATION BY MASS SPECTROMETRY [LARGE SCALE ANALYSIS]</scope>
</reference>
<sequence length="1394" mass="158880">MEEIPIKVAVRIRPLLCKEVLHNHQVCVRDIPKTQQIIIGRDRVFTFDFVFGKNSTQDEVYSTCIKPLVLSLIEGYNATVFAYGQTGSGKTYTIGGGHVASVVDGQKGIIPRAIQEIFQSISGNPNIDFKIKVSYIEVYKEDLRDLLELETSMKDLHIREDEKGNTVIVGAKECQVDSVEDVMGLLQVGNAARHTGTTQMNEHSSRSHAIFTISVCQVGKSAEATEDGEWCSHRHIVSKFHFVDLAGSERVTKTGNTGERFKESIQINSGLLALGNVISALGDPRRKSSHVPYRDAKITRLLKDSLGGSAKTVMITCVSPSSSDFDESLNSLKYANRARNIRNKPTLNFSPQADRMDEMEFEIKLLREALQSHQASISQTSQTASENVPDQNRIHSLEEQIAQLQEECLGYQDCIEQAFAFLVDLKDAVRLNQKQQHKLQQWFSRTQEVRKAVLTPLPGNQSIGNLEEGPQHVTVLQLKRELKKYQCALAADQVVFTQKELELEELRRQMQLMAQESKGHAVSLKEAQKVNRLQNEKIIEQQLLVDQLSEELAKRSSSMPTSTKESCGDGPDARAPEKRPHTAPFDSHWGHYVYIPSRQDFKKVCSSSPVYSLDQVFAGFRTRSQMLMGHLEDQDEVLHCQFSDNSDDEDSEGQEKPRVRSRSHSWVKKPGSVCSLVEMSDTQAECQRSYLGNGDLKMESLQESQELNLQKLRTSELILNKAKQKMRELTINIRMKEDLIKELIKTGDNAKSVSRQYSLKVTKLEHEAEQAKVELTETRKQLQELEGKDLSDVALKVKLQKEFRKKMDAAKLRVQVLQKKQQDSKKLASLSIQNEKRASELEQNVDHLKYQKVQLQRRLREESEKKKQLDAEVKRDQQKLKELQLNAGQGEGLHPKAEDTDAFNLNRRKGPFRSVDQLQKLDEQRKWLDEEVEKVLSQRQELEMLEEELKKREAIVSKKEALLQEKSHLENKKLRSSQALSTDSLKISARLNLLDQELSEKSLLLENSPTEEKVKISEQVQALQREREQLQRQRNSVDEKLRHGRVLSPKEEHLLFQLEEGIEALEAAIEFKNESIQNRQSSLKSSFQNLSQSESNVLEKLVCLNIAEIRAILFKYFNKVINLREAERKQQLQNKEMKMKVLERDNMVHELESALEYLRLQCDRRLTLQQKEHEQKMQLLLHHFKDQDGEGIIETLNKYEDKIQQLEKDLYFYKKTSRDLKKRLKDPVQGAVQWQRTLTEHHDAGDGVLNPEEAAVLSEELKWASRTENTKLNGREKEVDNSSSSLKTPPLTQQILEDGPDSLPVCGSLAPSSGQLQSSADKTEAHAFTQSQSPPPPQLQPVRSIAQLQGVKPVKVCRRELRQISALELTLRRSSLGAGVRSVTADSLEEPEES</sequence>
<organism>
    <name type="scientific">Rattus norvegicus</name>
    <name type="common">Rat</name>
    <dbReference type="NCBI Taxonomy" id="10116"/>
    <lineage>
        <taxon>Eukaryota</taxon>
        <taxon>Metazoa</taxon>
        <taxon>Chordata</taxon>
        <taxon>Craniata</taxon>
        <taxon>Vertebrata</taxon>
        <taxon>Euteleostomi</taxon>
        <taxon>Mammalia</taxon>
        <taxon>Eutheria</taxon>
        <taxon>Euarchontoglires</taxon>
        <taxon>Glires</taxon>
        <taxon>Rodentia</taxon>
        <taxon>Myomorpha</taxon>
        <taxon>Muroidea</taxon>
        <taxon>Muridae</taxon>
        <taxon>Murinae</taxon>
        <taxon>Rattus</taxon>
    </lineage>
</organism>
<accession>Q7M6Z5</accession>
<proteinExistence type="evidence at protein level"/>
<feature type="chain" id="PRO_0000307145" description="Kinesin-like protein KIF27">
    <location>
        <begin position="1"/>
        <end position="1394"/>
    </location>
</feature>
<feature type="domain" description="Kinesin motor" evidence="4">
    <location>
        <begin position="5"/>
        <end position="341"/>
    </location>
</feature>
<feature type="region of interest" description="Disordered" evidence="5">
    <location>
        <begin position="551"/>
        <end position="583"/>
    </location>
</feature>
<feature type="region of interest" description="Disordered" evidence="5">
    <location>
        <begin position="642"/>
        <end position="664"/>
    </location>
</feature>
<feature type="region of interest" description="Disordered" evidence="5">
    <location>
        <begin position="1267"/>
        <end position="1340"/>
    </location>
</feature>
<feature type="region of interest" description="Disordered" evidence="5">
    <location>
        <begin position="1375"/>
        <end position="1394"/>
    </location>
</feature>
<feature type="coiled-coil region" evidence="3">
    <location>
        <begin position="352"/>
        <end position="418"/>
    </location>
</feature>
<feature type="coiled-coil region" evidence="3">
    <location>
        <begin position="493"/>
        <end position="554"/>
    </location>
</feature>
<feature type="coiled-coil region" evidence="3">
    <location>
        <begin position="709"/>
        <end position="980"/>
    </location>
</feature>
<feature type="coiled-coil region" evidence="3">
    <location>
        <begin position="1010"/>
        <end position="1078"/>
    </location>
</feature>
<feature type="coiled-coil region" evidence="3">
    <location>
        <begin position="1118"/>
        <end position="1152"/>
    </location>
</feature>
<feature type="coiled-coil region" evidence="3">
    <location>
        <begin position="1187"/>
        <end position="1226"/>
    </location>
</feature>
<feature type="compositionally biased region" description="Polar residues" evidence="5">
    <location>
        <begin position="555"/>
        <end position="565"/>
    </location>
</feature>
<feature type="compositionally biased region" description="Basic and acidic residues" evidence="5">
    <location>
        <begin position="571"/>
        <end position="580"/>
    </location>
</feature>
<feature type="compositionally biased region" description="Basic and acidic residues" evidence="5">
    <location>
        <begin position="1267"/>
        <end position="1280"/>
    </location>
</feature>
<feature type="compositionally biased region" description="Polar residues" evidence="5">
    <location>
        <begin position="1281"/>
        <end position="1295"/>
    </location>
</feature>
<feature type="compositionally biased region" description="Polar residues" evidence="5">
    <location>
        <begin position="1310"/>
        <end position="1320"/>
    </location>
</feature>
<feature type="binding site" evidence="4">
    <location>
        <begin position="84"/>
        <end position="91"/>
    </location>
    <ligand>
        <name>ATP</name>
        <dbReference type="ChEBI" id="CHEBI:30616"/>
    </ligand>
</feature>
<feature type="modified residue" description="Phosphoserine" evidence="2">
    <location>
        <position position="643"/>
    </location>
</feature>
<feature type="modified residue" description="Phosphoserine" evidence="2">
    <location>
        <position position="646"/>
    </location>
</feature>
<feature type="modified residue" description="Phosphoserine" evidence="7">
    <location>
        <position position="672"/>
    </location>
</feature>
<feature type="modified residue" description="Phosphoserine" evidence="7">
    <location>
        <position position="675"/>
    </location>
</feature>
<feature type="modified residue" description="Phosphoserine" evidence="7">
    <location>
        <position position="704"/>
    </location>
</feature>
<feature type="modified residue" description="Phosphoserine" evidence="7">
    <location>
        <position position="999"/>
    </location>
</feature>
<feature type="modified residue" description="Phosphoserine" evidence="7">
    <location>
        <position position="1365"/>
    </location>
</feature>
<feature type="modified residue" description="Phosphoserine" evidence="7">
    <location>
        <position position="1387"/>
    </location>
</feature>
<name>KIF27_RAT</name>